<organism>
    <name type="scientific">Saccharomyces cerevisiae (strain RM11-1a)</name>
    <name type="common">Baker's yeast</name>
    <dbReference type="NCBI Taxonomy" id="285006"/>
    <lineage>
        <taxon>Eukaryota</taxon>
        <taxon>Fungi</taxon>
        <taxon>Dikarya</taxon>
        <taxon>Ascomycota</taxon>
        <taxon>Saccharomycotina</taxon>
        <taxon>Saccharomycetes</taxon>
        <taxon>Saccharomycetales</taxon>
        <taxon>Saccharomycetaceae</taxon>
        <taxon>Saccharomyces</taxon>
    </lineage>
</organism>
<sequence length="863" mass="101906">MGYDSQVRTKKRHRITVVCTNCKKRKSKCDRTKPCGTCVRLGDVDSCVYLTDSSGQPESSPSLNDADPLRKQSTPAERISPGFIKKRRSSQTRQDEDHWQRVRELESQSSLYYLPIHEETPFFIDLIPNGFYLETKRSADNLFGLFTDRAIENRDPYLQAMVTFRSIAIKKMMDKLGSNGNNVKNGSLPKSFEALSTFDADDERHISDDVVDKGNNFRMHQTIHKSLFNKFAQYRENNAKKFSSETILAKDYLPPLKILESEVLALFEEKIYNMIPIFDMKILRHEITIFYQNIVEKGNPISIKHYDHMVFCIILLIIKICRLSVQFSKLTPYIYPVLQEIDTSKFLALVKHYLFETKVLRKCNFLQLQCLILLRFLHWCAPEDGDGPETQYCQILMGTIISSCKEMGINWYCFSHPEKYSFKINRHTRPSYDIMKPSDYISVFRKIWSYVLFWDRKMCFISGEECQIGKTLQCHFKEEADTPTWYIRMLTLDNLMKKINDTLNDDPGKVDLNLLHRLINDLKRNFHILKSLSKNEKETMRHFDFEMEWIIDLFSLSLLHGEMIFYEYDCNITKFYKSFQDLWDMVIHISEKCYNYFFNSDALEVDSLTKFYTNRIVEIVANKVLVIVPAFILRGDRFKTIQYADKKKMIEFLYGVSSVYFNEFGFEYYRCFRKMFTAKIAYKILNRSCEKDAWRIILKFLLNELKLEDNGDSYIDYNDMRLKDICPIILEFQETVQKYDGYRPDILSIWNNEFYPIGKYNDDMTGFKFQMRIKEMQEFLDMEKYSDRFNIFSSFYDHASSQLAKHTEVDTNISITNEQVAETPQKELLQQPLAPALPVNDLIVSEFDVIEDIFDPVDFVSFF</sequence>
<comment type="function">
    <text evidence="1">Transcriptional inhibitor with a significantly increased number of target genes in response to oleate.</text>
</comment>
<comment type="subcellular location">
    <subcellularLocation>
        <location evidence="1">Cytoplasm</location>
    </subcellularLocation>
    <subcellularLocation>
        <location evidence="2">Nucleus</location>
    </subcellularLocation>
    <subcellularLocation>
        <location evidence="1">Mitochondrion</location>
    </subcellularLocation>
</comment>
<comment type="similarity">
    <text evidence="4">Belongs to the OAF3 family.</text>
</comment>
<feature type="chain" id="PRO_0000409042" description="Oleate activated transcription factor 3">
    <location>
        <begin position="1"/>
        <end position="863"/>
    </location>
</feature>
<feature type="DNA-binding region" description="Zn(2)-C6 fungal-type" evidence="2">
    <location>
        <begin position="19"/>
        <end position="47"/>
    </location>
</feature>
<feature type="region of interest" description="Disordered" evidence="3">
    <location>
        <begin position="52"/>
        <end position="81"/>
    </location>
</feature>
<feature type="compositionally biased region" description="Polar residues" evidence="3">
    <location>
        <begin position="52"/>
        <end position="63"/>
    </location>
</feature>
<name>OAF3_YEAS1</name>
<reference key="1">
    <citation type="submission" date="2005-03" db="EMBL/GenBank/DDBJ databases">
        <title>Annotation of the Saccharomyces cerevisiae RM11-1a genome.</title>
        <authorList>
            <consortium name="The Broad Institute Genome Sequencing Platform"/>
            <person name="Birren B.W."/>
            <person name="Lander E.S."/>
            <person name="Galagan J.E."/>
            <person name="Nusbaum C."/>
            <person name="Devon K."/>
            <person name="Cuomo C."/>
            <person name="Jaffe D.B."/>
            <person name="Butler J."/>
            <person name="Alvarez P."/>
            <person name="Gnerre S."/>
            <person name="Grabherr M."/>
            <person name="Kleber M."/>
            <person name="Mauceli E.W."/>
            <person name="Brockman W."/>
            <person name="MacCallum I.A."/>
            <person name="Rounsley S."/>
            <person name="Young S.K."/>
            <person name="LaButti K."/>
            <person name="Pushparaj V."/>
            <person name="DeCaprio D."/>
            <person name="Crawford M."/>
            <person name="Koehrsen M."/>
            <person name="Engels R."/>
            <person name="Montgomery P."/>
            <person name="Pearson M."/>
            <person name="Howarth C."/>
            <person name="Larson L."/>
            <person name="Luoma S."/>
            <person name="White J."/>
            <person name="O'Leary S."/>
            <person name="Kodira C.D."/>
            <person name="Zeng Q."/>
            <person name="Yandava C."/>
            <person name="Alvarado L."/>
            <person name="Pratt S."/>
            <person name="Kruglyak L."/>
        </authorList>
    </citation>
    <scope>NUCLEOTIDE SEQUENCE [LARGE SCALE GENOMIC DNA]</scope>
    <source>
        <strain>RM11-1a</strain>
    </source>
</reference>
<protein>
    <recommendedName>
        <fullName>Oleate activated transcription factor 3</fullName>
    </recommendedName>
</protein>
<keyword id="KW-0963">Cytoplasm</keyword>
<keyword id="KW-0238">DNA-binding</keyword>
<keyword id="KW-0479">Metal-binding</keyword>
<keyword id="KW-0496">Mitochondrion</keyword>
<keyword id="KW-0539">Nucleus</keyword>
<keyword id="KW-0678">Repressor</keyword>
<keyword id="KW-0804">Transcription</keyword>
<keyword id="KW-0805">Transcription regulation</keyword>
<keyword id="KW-0862">Zinc</keyword>
<dbReference type="EMBL" id="CH408051">
    <property type="protein sequence ID" value="EDV13142.1"/>
    <property type="molecule type" value="Genomic_DNA"/>
</dbReference>
<dbReference type="SMR" id="B3LRD9"/>
<dbReference type="HOGENOM" id="CLU_018684_0_0_1"/>
<dbReference type="OrthoDB" id="19060at4893"/>
<dbReference type="Proteomes" id="UP000008335">
    <property type="component" value="Unassembled WGS sequence"/>
</dbReference>
<dbReference type="GO" id="GO:0005739">
    <property type="term" value="C:mitochondrion"/>
    <property type="evidence" value="ECO:0007669"/>
    <property type="project" value="UniProtKB-SubCell"/>
</dbReference>
<dbReference type="GO" id="GO:0005634">
    <property type="term" value="C:nucleus"/>
    <property type="evidence" value="ECO:0007669"/>
    <property type="project" value="UniProtKB-SubCell"/>
</dbReference>
<dbReference type="GO" id="GO:0000981">
    <property type="term" value="F:DNA-binding transcription factor activity, RNA polymerase II-specific"/>
    <property type="evidence" value="ECO:0007669"/>
    <property type="project" value="InterPro"/>
</dbReference>
<dbReference type="GO" id="GO:0000978">
    <property type="term" value="F:RNA polymerase II cis-regulatory region sequence-specific DNA binding"/>
    <property type="evidence" value="ECO:0007669"/>
    <property type="project" value="TreeGrafter"/>
</dbReference>
<dbReference type="GO" id="GO:0008270">
    <property type="term" value="F:zinc ion binding"/>
    <property type="evidence" value="ECO:0007669"/>
    <property type="project" value="InterPro"/>
</dbReference>
<dbReference type="GO" id="GO:0045944">
    <property type="term" value="P:positive regulation of transcription by RNA polymerase II"/>
    <property type="evidence" value="ECO:0007669"/>
    <property type="project" value="TreeGrafter"/>
</dbReference>
<dbReference type="CDD" id="cd12148">
    <property type="entry name" value="fungal_TF_MHR"/>
    <property type="match status" value="1"/>
</dbReference>
<dbReference type="CDD" id="cd00067">
    <property type="entry name" value="GAL4"/>
    <property type="match status" value="1"/>
</dbReference>
<dbReference type="Gene3D" id="4.10.240.10">
    <property type="entry name" value="Zn(2)-C6 fungal-type DNA-binding domain"/>
    <property type="match status" value="1"/>
</dbReference>
<dbReference type="InterPro" id="IPR050675">
    <property type="entry name" value="OAF3"/>
</dbReference>
<dbReference type="InterPro" id="IPR036864">
    <property type="entry name" value="Zn2-C6_fun-type_DNA-bd_sf"/>
</dbReference>
<dbReference type="InterPro" id="IPR001138">
    <property type="entry name" value="Zn2Cys6_DnaBD"/>
</dbReference>
<dbReference type="PANTHER" id="PTHR31069:SF33">
    <property type="entry name" value="OLEATE ACTIVATED TRANSCRIPTION FACTOR 3"/>
    <property type="match status" value="1"/>
</dbReference>
<dbReference type="PANTHER" id="PTHR31069">
    <property type="entry name" value="OLEATE-ACTIVATED TRANSCRIPTION FACTOR 1-RELATED"/>
    <property type="match status" value="1"/>
</dbReference>
<dbReference type="Pfam" id="PF00172">
    <property type="entry name" value="Zn_clus"/>
    <property type="match status" value="1"/>
</dbReference>
<dbReference type="SMART" id="SM00066">
    <property type="entry name" value="GAL4"/>
    <property type="match status" value="1"/>
</dbReference>
<dbReference type="SUPFAM" id="SSF57701">
    <property type="entry name" value="Zn2/Cys6 DNA-binding domain"/>
    <property type="match status" value="1"/>
</dbReference>
<dbReference type="PROSITE" id="PS00463">
    <property type="entry name" value="ZN2_CY6_FUNGAL_1"/>
    <property type="match status" value="1"/>
</dbReference>
<dbReference type="PROSITE" id="PS50048">
    <property type="entry name" value="ZN2_CY6_FUNGAL_2"/>
    <property type="match status" value="1"/>
</dbReference>
<gene>
    <name type="primary">OAF3</name>
    <name type="ORF">SCRG_04079</name>
</gene>
<evidence type="ECO:0000250" key="1"/>
<evidence type="ECO:0000255" key="2">
    <source>
        <dbReference type="PROSITE-ProRule" id="PRU00227"/>
    </source>
</evidence>
<evidence type="ECO:0000256" key="3">
    <source>
        <dbReference type="SAM" id="MobiDB-lite"/>
    </source>
</evidence>
<evidence type="ECO:0000305" key="4"/>
<accession>B3LRD9</accession>
<proteinExistence type="inferred from homology"/>